<name>RIBB_HISS2</name>
<gene>
    <name evidence="1" type="primary">ribB</name>
    <name type="ordered locus">HSM_1983</name>
</gene>
<feature type="chain" id="PRO_1000077265" description="3,4-dihydroxy-2-butanone 4-phosphate synthase">
    <location>
        <begin position="1"/>
        <end position="214"/>
    </location>
</feature>
<feature type="binding site" evidence="1">
    <location>
        <begin position="37"/>
        <end position="38"/>
    </location>
    <ligand>
        <name>D-ribulose 5-phosphate</name>
        <dbReference type="ChEBI" id="CHEBI:58121"/>
    </ligand>
</feature>
<feature type="binding site" evidence="1">
    <location>
        <position position="38"/>
    </location>
    <ligand>
        <name>Mg(2+)</name>
        <dbReference type="ChEBI" id="CHEBI:18420"/>
        <label>1</label>
    </ligand>
</feature>
<feature type="binding site" evidence="1">
    <location>
        <position position="38"/>
    </location>
    <ligand>
        <name>Mg(2+)</name>
        <dbReference type="ChEBI" id="CHEBI:18420"/>
        <label>2</label>
    </ligand>
</feature>
<feature type="binding site" evidence="1">
    <location>
        <position position="42"/>
    </location>
    <ligand>
        <name>D-ribulose 5-phosphate</name>
        <dbReference type="ChEBI" id="CHEBI:58121"/>
    </ligand>
</feature>
<feature type="binding site" evidence="1">
    <location>
        <begin position="150"/>
        <end position="154"/>
    </location>
    <ligand>
        <name>D-ribulose 5-phosphate</name>
        <dbReference type="ChEBI" id="CHEBI:58121"/>
    </ligand>
</feature>
<feature type="binding site" evidence="1">
    <location>
        <position position="153"/>
    </location>
    <ligand>
        <name>Mg(2+)</name>
        <dbReference type="ChEBI" id="CHEBI:18420"/>
        <label>2</label>
    </ligand>
</feature>
<feature type="binding site" evidence="1">
    <location>
        <position position="174"/>
    </location>
    <ligand>
        <name>D-ribulose 5-phosphate</name>
        <dbReference type="ChEBI" id="CHEBI:58121"/>
    </ligand>
</feature>
<feature type="site" description="Essential for catalytic activity" evidence="1">
    <location>
        <position position="136"/>
    </location>
</feature>
<feature type="site" description="Essential for catalytic activity" evidence="1">
    <location>
        <position position="174"/>
    </location>
</feature>
<accession>B0UX44</accession>
<dbReference type="EC" id="4.1.99.12" evidence="1"/>
<dbReference type="EMBL" id="CP000947">
    <property type="protein sequence ID" value="ACA31780.1"/>
    <property type="molecule type" value="Genomic_DNA"/>
</dbReference>
<dbReference type="RefSeq" id="WP_012341040.1">
    <property type="nucleotide sequence ID" value="NC_010519.1"/>
</dbReference>
<dbReference type="SMR" id="B0UX44"/>
<dbReference type="STRING" id="228400.HSM_1983"/>
<dbReference type="GeneID" id="31488294"/>
<dbReference type="KEGG" id="hsm:HSM_1983"/>
<dbReference type="HOGENOM" id="CLU_020273_3_0_6"/>
<dbReference type="UniPathway" id="UPA00275">
    <property type="reaction ID" value="UER00399"/>
</dbReference>
<dbReference type="GO" id="GO:0005829">
    <property type="term" value="C:cytosol"/>
    <property type="evidence" value="ECO:0007669"/>
    <property type="project" value="TreeGrafter"/>
</dbReference>
<dbReference type="GO" id="GO:0008686">
    <property type="term" value="F:3,4-dihydroxy-2-butanone-4-phosphate synthase activity"/>
    <property type="evidence" value="ECO:0007669"/>
    <property type="project" value="UniProtKB-UniRule"/>
</dbReference>
<dbReference type="GO" id="GO:0000287">
    <property type="term" value="F:magnesium ion binding"/>
    <property type="evidence" value="ECO:0007669"/>
    <property type="project" value="UniProtKB-UniRule"/>
</dbReference>
<dbReference type="GO" id="GO:0030145">
    <property type="term" value="F:manganese ion binding"/>
    <property type="evidence" value="ECO:0007669"/>
    <property type="project" value="UniProtKB-UniRule"/>
</dbReference>
<dbReference type="GO" id="GO:0009231">
    <property type="term" value="P:riboflavin biosynthetic process"/>
    <property type="evidence" value="ECO:0007669"/>
    <property type="project" value="UniProtKB-UniRule"/>
</dbReference>
<dbReference type="FunFam" id="3.90.870.10:FF:000002">
    <property type="entry name" value="3,4-dihydroxy-2-butanone 4-phosphate synthase"/>
    <property type="match status" value="1"/>
</dbReference>
<dbReference type="Gene3D" id="3.90.870.10">
    <property type="entry name" value="DHBP synthase"/>
    <property type="match status" value="1"/>
</dbReference>
<dbReference type="HAMAP" id="MF_00180">
    <property type="entry name" value="RibB"/>
    <property type="match status" value="1"/>
</dbReference>
<dbReference type="InterPro" id="IPR017945">
    <property type="entry name" value="DHBP_synth_RibB-like_a/b_dom"/>
</dbReference>
<dbReference type="InterPro" id="IPR000422">
    <property type="entry name" value="DHBP_synthase_RibB"/>
</dbReference>
<dbReference type="NCBIfam" id="TIGR00506">
    <property type="entry name" value="ribB"/>
    <property type="match status" value="1"/>
</dbReference>
<dbReference type="PANTHER" id="PTHR21327:SF38">
    <property type="entry name" value="3,4-DIHYDROXY-2-BUTANONE 4-PHOSPHATE SYNTHASE"/>
    <property type="match status" value="1"/>
</dbReference>
<dbReference type="PANTHER" id="PTHR21327">
    <property type="entry name" value="GTP CYCLOHYDROLASE II-RELATED"/>
    <property type="match status" value="1"/>
</dbReference>
<dbReference type="Pfam" id="PF00926">
    <property type="entry name" value="DHBP_synthase"/>
    <property type="match status" value="1"/>
</dbReference>
<dbReference type="SUPFAM" id="SSF55821">
    <property type="entry name" value="YrdC/RibB"/>
    <property type="match status" value="1"/>
</dbReference>
<organism>
    <name type="scientific">Histophilus somni (strain 2336)</name>
    <name type="common">Haemophilus somnus</name>
    <dbReference type="NCBI Taxonomy" id="228400"/>
    <lineage>
        <taxon>Bacteria</taxon>
        <taxon>Pseudomonadati</taxon>
        <taxon>Pseudomonadota</taxon>
        <taxon>Gammaproteobacteria</taxon>
        <taxon>Pasteurellales</taxon>
        <taxon>Pasteurellaceae</taxon>
        <taxon>Histophilus</taxon>
    </lineage>
</organism>
<protein>
    <recommendedName>
        <fullName evidence="1">3,4-dihydroxy-2-butanone 4-phosphate synthase</fullName>
        <shortName evidence="1">DHBP synthase</shortName>
        <ecNumber evidence="1">4.1.99.12</ecNumber>
    </recommendedName>
</protein>
<keyword id="KW-0456">Lyase</keyword>
<keyword id="KW-0460">Magnesium</keyword>
<keyword id="KW-0464">Manganese</keyword>
<keyword id="KW-0479">Metal-binding</keyword>
<keyword id="KW-0686">Riboflavin biosynthesis</keyword>
<reference key="1">
    <citation type="submission" date="2008-02" db="EMBL/GenBank/DDBJ databases">
        <title>Complete sequence of Haemophilus somnus 2336.</title>
        <authorList>
            <consortium name="US DOE Joint Genome Institute"/>
            <person name="Siddaramappa S."/>
            <person name="Duncan A.J."/>
            <person name="Challacombe J.F."/>
            <person name="Rainey D."/>
            <person name="Gillaspy A.F."/>
            <person name="Carson M."/>
            <person name="Gipson J."/>
            <person name="Gipson M."/>
            <person name="Bruce D."/>
            <person name="Detter J.C."/>
            <person name="Han C.S."/>
            <person name="Land M."/>
            <person name="Tapia R."/>
            <person name="Thompson L.S."/>
            <person name="Orvis J."/>
            <person name="Zaitshik J."/>
            <person name="Barnes G."/>
            <person name="Brettin T.S."/>
            <person name="Dyer D.W."/>
            <person name="Inzana T.J."/>
        </authorList>
    </citation>
    <scope>NUCLEOTIDE SEQUENCE [LARGE SCALE GENOMIC DNA]</scope>
    <source>
        <strain>2336</strain>
    </source>
</reference>
<comment type="function">
    <text evidence="1">Catalyzes the conversion of D-ribulose 5-phosphate to formate and 3,4-dihydroxy-2-butanone 4-phosphate.</text>
</comment>
<comment type="catalytic activity">
    <reaction evidence="1">
        <text>D-ribulose 5-phosphate = (2S)-2-hydroxy-3-oxobutyl phosphate + formate + H(+)</text>
        <dbReference type="Rhea" id="RHEA:18457"/>
        <dbReference type="ChEBI" id="CHEBI:15378"/>
        <dbReference type="ChEBI" id="CHEBI:15740"/>
        <dbReference type="ChEBI" id="CHEBI:58121"/>
        <dbReference type="ChEBI" id="CHEBI:58830"/>
        <dbReference type="EC" id="4.1.99.12"/>
    </reaction>
</comment>
<comment type="cofactor">
    <cofactor evidence="1">
        <name>Mg(2+)</name>
        <dbReference type="ChEBI" id="CHEBI:18420"/>
    </cofactor>
    <cofactor evidence="1">
        <name>Mn(2+)</name>
        <dbReference type="ChEBI" id="CHEBI:29035"/>
    </cofactor>
    <text evidence="1">Binds 2 divalent metal cations per subunit. Magnesium or manganese.</text>
</comment>
<comment type="pathway">
    <text evidence="1">Cofactor biosynthesis; riboflavin biosynthesis; 2-hydroxy-3-oxobutyl phosphate from D-ribulose 5-phosphate: step 1/1.</text>
</comment>
<comment type="subunit">
    <text evidence="1">Homodimer.</text>
</comment>
<comment type="similarity">
    <text evidence="1">Belongs to the DHBP synthase family.</text>
</comment>
<proteinExistence type="inferred from homology"/>
<evidence type="ECO:0000255" key="1">
    <source>
        <dbReference type="HAMAP-Rule" id="MF_00180"/>
    </source>
</evidence>
<sequence>MNQSLLSQFGTSEERVKRAIEAFKRGNGVLVLDDEDRENEGDLIFPAETITVEQMAKLIRYGSGIVCLCITDELCQQLDLPPMVQNNTSINQTAFTVSIEAAQGVSTGVSAQDRVTTIQVAIADNAKPQDLSRPGHVFPLRAKKGGVLARRGHTEAAVDLASWAGHKPAGVICEITNDDGSMARTLEIVEFGKKFNYPVVTIEDLVRYSSSKVV</sequence>